<name>RFP2_SCHPO</name>
<organism>
    <name type="scientific">Schizosaccharomyces pombe (strain 972 / ATCC 24843)</name>
    <name type="common">Fission yeast</name>
    <dbReference type="NCBI Taxonomy" id="284812"/>
    <lineage>
        <taxon>Eukaryota</taxon>
        <taxon>Fungi</taxon>
        <taxon>Dikarya</taxon>
        <taxon>Ascomycota</taxon>
        <taxon>Taphrinomycotina</taxon>
        <taxon>Schizosaccharomycetes</taxon>
        <taxon>Schizosaccharomycetales</taxon>
        <taxon>Schizosaccharomycetaceae</taxon>
        <taxon>Schizosaccharomyces</taxon>
    </lineage>
</organism>
<dbReference type="EC" id="2.3.2.27"/>
<dbReference type="EMBL" id="CU329670">
    <property type="protein sequence ID" value="CAB52281.1"/>
    <property type="molecule type" value="Genomic_DNA"/>
</dbReference>
<dbReference type="PIR" id="T38667">
    <property type="entry name" value="T38667"/>
</dbReference>
<dbReference type="RefSeq" id="NP_593439.1">
    <property type="nucleotide sequence ID" value="NM_001018872.2"/>
</dbReference>
<dbReference type="SMR" id="Q9UT72"/>
<dbReference type="BioGRID" id="279621">
    <property type="interactions" value="19"/>
</dbReference>
<dbReference type="ELM" id="Q9UT72"/>
<dbReference type="FunCoup" id="Q9UT72">
    <property type="interactions" value="5"/>
</dbReference>
<dbReference type="IntAct" id="Q9UT72">
    <property type="interactions" value="4"/>
</dbReference>
<dbReference type="MINT" id="Q9UT72"/>
<dbReference type="STRING" id="284812.Q9UT72"/>
<dbReference type="PaxDb" id="4896-SPAC343.18.1"/>
<dbReference type="EnsemblFungi" id="SPAC343.18.1">
    <property type="protein sequence ID" value="SPAC343.18.1:pep"/>
    <property type="gene ID" value="SPAC343.18"/>
</dbReference>
<dbReference type="GeneID" id="2543192"/>
<dbReference type="KEGG" id="spo:2543192"/>
<dbReference type="PomBase" id="SPAC343.18">
    <property type="gene designation" value="rfp2"/>
</dbReference>
<dbReference type="VEuPathDB" id="FungiDB:SPAC343.18"/>
<dbReference type="eggNOG" id="KOG0320">
    <property type="taxonomic scope" value="Eukaryota"/>
</dbReference>
<dbReference type="HOGENOM" id="CLU_1422181_0_0_1"/>
<dbReference type="InParanoid" id="Q9UT72"/>
<dbReference type="OMA" id="IFASKCG"/>
<dbReference type="Reactome" id="R-SPO-983168">
    <property type="pathway name" value="Antigen processing: Ubiquitination &amp; Proteasome degradation"/>
</dbReference>
<dbReference type="UniPathway" id="UPA00143"/>
<dbReference type="PRO" id="PR:Q9UT72"/>
<dbReference type="Proteomes" id="UP000002485">
    <property type="component" value="Chromosome I"/>
</dbReference>
<dbReference type="GO" id="GO:0005634">
    <property type="term" value="C:nucleus"/>
    <property type="evidence" value="ECO:0000314"/>
    <property type="project" value="PomBase"/>
</dbReference>
<dbReference type="GO" id="GO:0033768">
    <property type="term" value="C:SUMO-targeted ubiquitin ligase complex"/>
    <property type="evidence" value="ECO:0000353"/>
    <property type="project" value="PomBase"/>
</dbReference>
<dbReference type="GO" id="GO:0016740">
    <property type="term" value="F:transferase activity"/>
    <property type="evidence" value="ECO:0007669"/>
    <property type="project" value="UniProtKB-KW"/>
</dbReference>
<dbReference type="GO" id="GO:0008270">
    <property type="term" value="F:zinc ion binding"/>
    <property type="evidence" value="ECO:0000255"/>
    <property type="project" value="PomBase"/>
</dbReference>
<dbReference type="GO" id="GO:0006281">
    <property type="term" value="P:DNA repair"/>
    <property type="evidence" value="ECO:0000316"/>
    <property type="project" value="PomBase"/>
</dbReference>
<dbReference type="GO" id="GO:0016567">
    <property type="term" value="P:protein ubiquitination"/>
    <property type="evidence" value="ECO:0007669"/>
    <property type="project" value="UniProtKB-UniPathway"/>
</dbReference>
<dbReference type="GO" id="GO:0120290">
    <property type="term" value="P:stalled replication fork localization to nuclear periphery"/>
    <property type="evidence" value="ECO:0000315"/>
    <property type="project" value="PomBase"/>
</dbReference>
<dbReference type="GO" id="GO:0006511">
    <property type="term" value="P:ubiquitin-dependent protein catabolic process"/>
    <property type="evidence" value="ECO:0000314"/>
    <property type="project" value="PomBase"/>
</dbReference>
<dbReference type="Gene3D" id="3.30.40.10">
    <property type="entry name" value="Zinc/RING finger domain, C3HC4 (zinc finger)"/>
    <property type="match status" value="1"/>
</dbReference>
<dbReference type="InterPro" id="IPR047134">
    <property type="entry name" value="RNF4"/>
</dbReference>
<dbReference type="InterPro" id="IPR001841">
    <property type="entry name" value="Znf_RING"/>
</dbReference>
<dbReference type="InterPro" id="IPR013083">
    <property type="entry name" value="Znf_RING/FYVE/PHD"/>
</dbReference>
<dbReference type="InterPro" id="IPR017907">
    <property type="entry name" value="Znf_RING_CS"/>
</dbReference>
<dbReference type="PANTHER" id="PTHR23041:SF79">
    <property type="entry name" value="E3 UBIQUITIN-PROTEIN LIGASE COMPLEX SLX8-RFP SUBUNIT RFP2"/>
    <property type="match status" value="1"/>
</dbReference>
<dbReference type="PANTHER" id="PTHR23041">
    <property type="entry name" value="RING FINGER DOMAIN-CONTAINING"/>
    <property type="match status" value="1"/>
</dbReference>
<dbReference type="Pfam" id="PF14634">
    <property type="entry name" value="zf-RING_5"/>
    <property type="match status" value="1"/>
</dbReference>
<dbReference type="SUPFAM" id="SSF57850">
    <property type="entry name" value="RING/U-box"/>
    <property type="match status" value="1"/>
</dbReference>
<dbReference type="PROSITE" id="PS00518">
    <property type="entry name" value="ZF_RING_1"/>
    <property type="match status" value="1"/>
</dbReference>
<dbReference type="PROSITE" id="PS50089">
    <property type="entry name" value="ZF_RING_2"/>
    <property type="match status" value="1"/>
</dbReference>
<accession>Q9UT72</accession>
<comment type="function">
    <text evidence="3 4 5">Mediates ubiquitination and subsequent desumoylation/degradation of sumoylated proteins and proteins containing SUMO-like domains. Involved in maintaining genome stability where it acts in the cellular response to DNA damage.</text>
</comment>
<comment type="catalytic activity">
    <reaction>
        <text>S-ubiquitinyl-[E2 ubiquitin-conjugating enzyme]-L-cysteine + [acceptor protein]-L-lysine = [E2 ubiquitin-conjugating enzyme]-L-cysteine + N(6)-ubiquitinyl-[acceptor protein]-L-lysine.</text>
        <dbReference type="EC" id="2.3.2.27"/>
    </reaction>
</comment>
<comment type="pathway">
    <text>Protein modification; protein ubiquitination.</text>
</comment>
<comment type="subunit">
    <text evidence="5">Part of an E3 ubiquitin complex including rfp1, rfp2 and slx8. Interacts with slx8.</text>
</comment>
<comment type="interaction">
    <interactant intactId="EBI-7587772">
        <id>Q9UT72</id>
    </interactant>
    <interactant intactId="EBI-7588105">
        <id>P87176</id>
        <label>slx8</label>
    </interactant>
    <organismsDiffer>false</organismsDiffer>
    <experiments>3</experiments>
</comment>
<comment type="subcellular location">
    <subcellularLocation>
        <location evidence="2 4 5">Nucleus</location>
    </subcellularLocation>
</comment>
<keyword id="KW-0479">Metal-binding</keyword>
<keyword id="KW-0539">Nucleus</keyword>
<keyword id="KW-1185">Reference proteome</keyword>
<keyword id="KW-0808">Transferase</keyword>
<keyword id="KW-0833">Ubl conjugation pathway</keyword>
<keyword id="KW-0862">Zinc</keyword>
<keyword id="KW-0863">Zinc-finger</keyword>
<sequence>MNLHGLELPGRDQRLSPEVIDLTEDIEDDGADVSEVTLLDLTRIPEFQPRRRIRTSRNHLDANLSNVPTINSIPSPVTRPPVAVGGGIFYGARRTRNRSQTQRRTLLENGFRNSRKKAQDSSNSIAERVSPPPGFCYDVHPHNNIACAKCGNELVSDEKKSIFAAKCGHLFCSTCAKELRKKTVPCPVQHCRKRITKKFIFPLYL</sequence>
<protein>
    <recommendedName>
        <fullName>E3 ubiquitin-protein ligase complex slx8-rfp subunit rfp2</fullName>
        <ecNumber>2.3.2.27</ecNumber>
    </recommendedName>
    <alternativeName>
        <fullName>RING finger protein 2</fullName>
    </alternativeName>
    <alternativeName>
        <fullName evidence="6">RING-type E3 ubiquitin transferase rfp2</fullName>
    </alternativeName>
</protein>
<proteinExistence type="evidence at protein level"/>
<gene>
    <name type="primary">rfp2</name>
    <name type="ORF">SPAC343.18</name>
</gene>
<feature type="chain" id="PRO_0000358873" description="E3 ubiquitin-protein ligase complex slx8-rfp subunit rfp2">
    <location>
        <begin position="1"/>
        <end position="205"/>
    </location>
</feature>
<feature type="zinc finger region" description="RING-type; degenerate" evidence="1">
    <location>
        <begin position="147"/>
        <end position="190"/>
    </location>
</feature>
<evidence type="ECO:0000255" key="1">
    <source>
        <dbReference type="PROSITE-ProRule" id="PRU00175"/>
    </source>
</evidence>
<evidence type="ECO:0000269" key="2">
    <source>
    </source>
</evidence>
<evidence type="ECO:0000269" key="3">
    <source>
    </source>
</evidence>
<evidence type="ECO:0000269" key="4">
    <source>
    </source>
</evidence>
<evidence type="ECO:0000269" key="5">
    <source>
    </source>
</evidence>
<evidence type="ECO:0000305" key="6"/>
<reference key="1">
    <citation type="journal article" date="2002" name="Nature">
        <title>The genome sequence of Schizosaccharomyces pombe.</title>
        <authorList>
            <person name="Wood V."/>
            <person name="Gwilliam R."/>
            <person name="Rajandream M.A."/>
            <person name="Lyne M.H."/>
            <person name="Lyne R."/>
            <person name="Stewart A."/>
            <person name="Sgouros J.G."/>
            <person name="Peat N."/>
            <person name="Hayles J."/>
            <person name="Baker S.G."/>
            <person name="Basham D."/>
            <person name="Bowman S."/>
            <person name="Brooks K."/>
            <person name="Brown D."/>
            <person name="Brown S."/>
            <person name="Chillingworth T."/>
            <person name="Churcher C.M."/>
            <person name="Collins M."/>
            <person name="Connor R."/>
            <person name="Cronin A."/>
            <person name="Davis P."/>
            <person name="Feltwell T."/>
            <person name="Fraser A."/>
            <person name="Gentles S."/>
            <person name="Goble A."/>
            <person name="Hamlin N."/>
            <person name="Harris D.E."/>
            <person name="Hidalgo J."/>
            <person name="Hodgson G."/>
            <person name="Holroyd S."/>
            <person name="Hornsby T."/>
            <person name="Howarth S."/>
            <person name="Huckle E.J."/>
            <person name="Hunt S."/>
            <person name="Jagels K."/>
            <person name="James K.D."/>
            <person name="Jones L."/>
            <person name="Jones M."/>
            <person name="Leather S."/>
            <person name="McDonald S."/>
            <person name="McLean J."/>
            <person name="Mooney P."/>
            <person name="Moule S."/>
            <person name="Mungall K.L."/>
            <person name="Murphy L.D."/>
            <person name="Niblett D."/>
            <person name="Odell C."/>
            <person name="Oliver K."/>
            <person name="O'Neil S."/>
            <person name="Pearson D."/>
            <person name="Quail M.A."/>
            <person name="Rabbinowitsch E."/>
            <person name="Rutherford K.M."/>
            <person name="Rutter S."/>
            <person name="Saunders D."/>
            <person name="Seeger K."/>
            <person name="Sharp S."/>
            <person name="Skelton J."/>
            <person name="Simmonds M.N."/>
            <person name="Squares R."/>
            <person name="Squares S."/>
            <person name="Stevens K."/>
            <person name="Taylor K."/>
            <person name="Taylor R.G."/>
            <person name="Tivey A."/>
            <person name="Walsh S.V."/>
            <person name="Warren T."/>
            <person name="Whitehead S."/>
            <person name="Woodward J.R."/>
            <person name="Volckaert G."/>
            <person name="Aert R."/>
            <person name="Robben J."/>
            <person name="Grymonprez B."/>
            <person name="Weltjens I."/>
            <person name="Vanstreels E."/>
            <person name="Rieger M."/>
            <person name="Schaefer M."/>
            <person name="Mueller-Auer S."/>
            <person name="Gabel C."/>
            <person name="Fuchs M."/>
            <person name="Duesterhoeft A."/>
            <person name="Fritzc C."/>
            <person name="Holzer E."/>
            <person name="Moestl D."/>
            <person name="Hilbert H."/>
            <person name="Borzym K."/>
            <person name="Langer I."/>
            <person name="Beck A."/>
            <person name="Lehrach H."/>
            <person name="Reinhardt R."/>
            <person name="Pohl T.M."/>
            <person name="Eger P."/>
            <person name="Zimmermann W."/>
            <person name="Wedler H."/>
            <person name="Wambutt R."/>
            <person name="Purnelle B."/>
            <person name="Goffeau A."/>
            <person name="Cadieu E."/>
            <person name="Dreano S."/>
            <person name="Gloux S."/>
            <person name="Lelaure V."/>
            <person name="Mottier S."/>
            <person name="Galibert F."/>
            <person name="Aves S.J."/>
            <person name="Xiang Z."/>
            <person name="Hunt C."/>
            <person name="Moore K."/>
            <person name="Hurst S.M."/>
            <person name="Lucas M."/>
            <person name="Rochet M."/>
            <person name="Gaillardin C."/>
            <person name="Tallada V.A."/>
            <person name="Garzon A."/>
            <person name="Thode G."/>
            <person name="Daga R.R."/>
            <person name="Cruzado L."/>
            <person name="Jimenez J."/>
            <person name="Sanchez M."/>
            <person name="del Rey F."/>
            <person name="Benito J."/>
            <person name="Dominguez A."/>
            <person name="Revuelta J.L."/>
            <person name="Moreno S."/>
            <person name="Armstrong J."/>
            <person name="Forsburg S.L."/>
            <person name="Cerutti L."/>
            <person name="Lowe T."/>
            <person name="McCombie W.R."/>
            <person name="Paulsen I."/>
            <person name="Potashkin J."/>
            <person name="Shpakovski G.V."/>
            <person name="Ussery D."/>
            <person name="Barrell B.G."/>
            <person name="Nurse P."/>
        </authorList>
    </citation>
    <scope>NUCLEOTIDE SEQUENCE [LARGE SCALE GENOMIC DNA]</scope>
    <source>
        <strain>972 / ATCC 24843</strain>
    </source>
</reference>
<reference key="2">
    <citation type="journal article" date="2006" name="Nat. Biotechnol.">
        <title>ORFeome cloning and global analysis of protein localization in the fission yeast Schizosaccharomyces pombe.</title>
        <authorList>
            <person name="Matsuyama A."/>
            <person name="Arai R."/>
            <person name="Yashiroda Y."/>
            <person name="Shirai A."/>
            <person name="Kamata A."/>
            <person name="Sekido S."/>
            <person name="Kobayashi Y."/>
            <person name="Hashimoto A."/>
            <person name="Hamamoto M."/>
            <person name="Hiraoka Y."/>
            <person name="Horinouchi S."/>
            <person name="Yoshida M."/>
        </authorList>
    </citation>
    <scope>SUBCELLULAR LOCATION [LARGE SCALE ANALYSIS]</scope>
</reference>
<reference key="3">
    <citation type="journal article" date="2007" name="EMBO J.">
        <title>SUMO-targeted ubiquitin ligases in genome stability.</title>
        <authorList>
            <person name="Prudden J."/>
            <person name="Pebernard S."/>
            <person name="Raffa G."/>
            <person name="Slavin D.A."/>
            <person name="Perry J.J.P."/>
            <person name="Tainer J.A."/>
            <person name="McGowan C.H."/>
            <person name="Boddy M.N."/>
        </authorList>
    </citation>
    <scope>FUNCTION IN DEGRADATION OF SUMOYLATED PROTEINS</scope>
    <scope>IDENTIFICATION IN A E3 UBIQUITIN-PROTEIN LIGASE COMPLEX WITH RFP1 AND SLX8</scope>
    <scope>INTERACTION WITH SLX8</scope>
    <scope>SUBCELLULAR LOCATION</scope>
</reference>
<reference key="4">
    <citation type="journal article" date="2007" name="EMBO J.">
        <title>Conserved function of RNF4 family proteins in eukaryotes: targeting a ubiquitin ligase to SUMOylated proteins.</title>
        <authorList>
            <person name="Sun H."/>
            <person name="Leverson J.D."/>
            <person name="Hunter T."/>
        </authorList>
    </citation>
    <scope>FUNCTION IN DEGRADATION OF SUMOYLATED PROTEINS</scope>
    <scope>SUBCELLULAR LOCATION</scope>
</reference>
<reference key="5">
    <citation type="journal article" date="2007" name="J. Biol. Chem.">
        <title>Fission yeast Rnf4 homologs are required for DNA repair.</title>
        <authorList>
            <person name="Kosoy A."/>
            <person name="Calonge T.M."/>
            <person name="Outwin E.A."/>
            <person name="O'Connell M.J."/>
        </authorList>
    </citation>
    <scope>FUNCTION IN DEGRADATION OF SUMOYLATED PROTEINS</scope>
</reference>